<gene>
    <name evidence="1" type="primary">ybeY</name>
    <name type="ordered locus">BQ2027_MB2388C</name>
</gene>
<sequence>MSIEVANESGIDVSEAELVSVARFVIAKMDVNPCAELSMLLLDTAAMADLHMRWMDLPGPTDVMSFPMDELEPGGRPDAPEPGPSMLGDIVLCPEFAAEQAAAAGHSLGHELALLTIHGVLHLLGYDHAEPDEEKEMFALQDRLLEEWVADQVEAYQHDRQDEKDRRLLDKSRYFDL</sequence>
<evidence type="ECO:0000255" key="1">
    <source>
        <dbReference type="HAMAP-Rule" id="MF_00009"/>
    </source>
</evidence>
<evidence type="ECO:0000305" key="2"/>
<keyword id="KW-0963">Cytoplasm</keyword>
<keyword id="KW-0255">Endonuclease</keyword>
<keyword id="KW-0378">Hydrolase</keyword>
<keyword id="KW-0479">Metal-binding</keyword>
<keyword id="KW-0540">Nuclease</keyword>
<keyword id="KW-1185">Reference proteome</keyword>
<keyword id="KW-0690">Ribosome biogenesis</keyword>
<keyword id="KW-0698">rRNA processing</keyword>
<keyword id="KW-0862">Zinc</keyword>
<comment type="function">
    <text evidence="1">Single strand-specific metallo-endoribonuclease involved in late-stage 70S ribosome quality control and in maturation of the 3' terminus of the 16S rRNA.</text>
</comment>
<comment type="cofactor">
    <cofactor evidence="1">
        <name>Zn(2+)</name>
        <dbReference type="ChEBI" id="CHEBI:29105"/>
    </cofactor>
    <text evidence="1">Binds 1 zinc ion.</text>
</comment>
<comment type="subcellular location">
    <subcellularLocation>
        <location evidence="1">Cytoplasm</location>
    </subcellularLocation>
</comment>
<comment type="similarity">
    <text evidence="1">Belongs to the endoribonuclease YbeY family.</text>
</comment>
<comment type="sequence caution" evidence="2">
    <conflict type="erroneous initiation">
        <sequence resource="EMBL-CDS" id="SIU01000"/>
    </conflict>
    <text>Extended N-terminus.</text>
</comment>
<organism>
    <name type="scientific">Mycobacterium bovis (strain ATCC BAA-935 / AF2122/97)</name>
    <dbReference type="NCBI Taxonomy" id="233413"/>
    <lineage>
        <taxon>Bacteria</taxon>
        <taxon>Bacillati</taxon>
        <taxon>Actinomycetota</taxon>
        <taxon>Actinomycetes</taxon>
        <taxon>Mycobacteriales</taxon>
        <taxon>Mycobacteriaceae</taxon>
        <taxon>Mycobacterium</taxon>
        <taxon>Mycobacterium tuberculosis complex</taxon>
    </lineage>
</organism>
<reference key="1">
    <citation type="journal article" date="2003" name="Proc. Natl. Acad. Sci. U.S.A.">
        <title>The complete genome sequence of Mycobacterium bovis.</title>
        <authorList>
            <person name="Garnier T."/>
            <person name="Eiglmeier K."/>
            <person name="Camus J.-C."/>
            <person name="Medina N."/>
            <person name="Mansoor H."/>
            <person name="Pryor M."/>
            <person name="Duthoy S."/>
            <person name="Grondin S."/>
            <person name="Lacroix C."/>
            <person name="Monsempe C."/>
            <person name="Simon S."/>
            <person name="Harris B."/>
            <person name="Atkin R."/>
            <person name="Doggett J."/>
            <person name="Mayes R."/>
            <person name="Keating L."/>
            <person name="Wheeler P.R."/>
            <person name="Parkhill J."/>
            <person name="Barrell B.G."/>
            <person name="Cole S.T."/>
            <person name="Gordon S.V."/>
            <person name="Hewinson R.G."/>
        </authorList>
    </citation>
    <scope>NUCLEOTIDE SEQUENCE [LARGE SCALE GENOMIC DNA]</scope>
    <source>
        <strain>ATCC BAA-935 / AF2122/97</strain>
    </source>
</reference>
<reference key="2">
    <citation type="journal article" date="2017" name="Genome Announc.">
        <title>Updated reference genome sequence and annotation of Mycobacterium bovis AF2122/97.</title>
        <authorList>
            <person name="Malone K.M."/>
            <person name="Farrell D."/>
            <person name="Stuber T.P."/>
            <person name="Schubert O.T."/>
            <person name="Aebersold R."/>
            <person name="Robbe-Austerman S."/>
            <person name="Gordon S.V."/>
        </authorList>
    </citation>
    <scope>NUCLEOTIDE SEQUENCE [LARGE SCALE GENOMIC DNA]</scope>
    <scope>GENOME REANNOTATION</scope>
    <source>
        <strain>ATCC BAA-935 / AF2122/97</strain>
    </source>
</reference>
<accession>P67135</accession>
<accession>A0A1R3Y104</accession>
<accession>O05831</accession>
<accession>X2BKV6</accession>
<protein>
    <recommendedName>
        <fullName evidence="1">Endoribonuclease YbeY</fullName>
        <ecNumber evidence="1">3.1.-.-</ecNumber>
    </recommendedName>
</protein>
<proteinExistence type="inferred from homology"/>
<dbReference type="EC" id="3.1.-.-" evidence="1"/>
<dbReference type="EMBL" id="LT708304">
    <property type="protein sequence ID" value="SIU01000.1"/>
    <property type="status" value="ALT_INIT"/>
    <property type="molecule type" value="Genomic_DNA"/>
</dbReference>
<dbReference type="RefSeq" id="NP_856037.1">
    <property type="nucleotide sequence ID" value="NC_002945.3"/>
</dbReference>
<dbReference type="RefSeq" id="WP_003899292.1">
    <property type="nucleotide sequence ID" value="NC_002945.4"/>
</dbReference>
<dbReference type="SMR" id="P67135"/>
<dbReference type="KEGG" id="mbo:BQ2027_MB2388C"/>
<dbReference type="PATRIC" id="fig|233413.5.peg.2623"/>
<dbReference type="Proteomes" id="UP000001419">
    <property type="component" value="Chromosome"/>
</dbReference>
<dbReference type="GO" id="GO:0005737">
    <property type="term" value="C:cytoplasm"/>
    <property type="evidence" value="ECO:0007669"/>
    <property type="project" value="UniProtKB-SubCell"/>
</dbReference>
<dbReference type="GO" id="GO:0004222">
    <property type="term" value="F:metalloendopeptidase activity"/>
    <property type="evidence" value="ECO:0007669"/>
    <property type="project" value="InterPro"/>
</dbReference>
<dbReference type="GO" id="GO:0004521">
    <property type="term" value="F:RNA endonuclease activity"/>
    <property type="evidence" value="ECO:0007669"/>
    <property type="project" value="UniProtKB-UniRule"/>
</dbReference>
<dbReference type="GO" id="GO:0008270">
    <property type="term" value="F:zinc ion binding"/>
    <property type="evidence" value="ECO:0007669"/>
    <property type="project" value="UniProtKB-UniRule"/>
</dbReference>
<dbReference type="GO" id="GO:0006364">
    <property type="term" value="P:rRNA processing"/>
    <property type="evidence" value="ECO:0007669"/>
    <property type="project" value="UniProtKB-UniRule"/>
</dbReference>
<dbReference type="Gene3D" id="3.40.390.30">
    <property type="entry name" value="Metalloproteases ('zincins'), catalytic domain"/>
    <property type="match status" value="1"/>
</dbReference>
<dbReference type="HAMAP" id="MF_00009">
    <property type="entry name" value="Endoribonucl_YbeY"/>
    <property type="match status" value="1"/>
</dbReference>
<dbReference type="InterPro" id="IPR023091">
    <property type="entry name" value="MetalPrtase_cat_dom_sf_prd"/>
</dbReference>
<dbReference type="InterPro" id="IPR002036">
    <property type="entry name" value="YbeY"/>
</dbReference>
<dbReference type="InterPro" id="IPR020549">
    <property type="entry name" value="YbeY_CS"/>
</dbReference>
<dbReference type="NCBIfam" id="TIGR00043">
    <property type="entry name" value="rRNA maturation RNase YbeY"/>
    <property type="match status" value="1"/>
</dbReference>
<dbReference type="PANTHER" id="PTHR46986">
    <property type="entry name" value="ENDORIBONUCLEASE YBEY, CHLOROPLASTIC"/>
    <property type="match status" value="1"/>
</dbReference>
<dbReference type="PANTHER" id="PTHR46986:SF1">
    <property type="entry name" value="ENDORIBONUCLEASE YBEY, CHLOROPLASTIC"/>
    <property type="match status" value="1"/>
</dbReference>
<dbReference type="Pfam" id="PF02130">
    <property type="entry name" value="YbeY"/>
    <property type="match status" value="1"/>
</dbReference>
<dbReference type="SUPFAM" id="SSF55486">
    <property type="entry name" value="Metalloproteases ('zincins'), catalytic domain"/>
    <property type="match status" value="1"/>
</dbReference>
<dbReference type="PROSITE" id="PS01306">
    <property type="entry name" value="UPF0054"/>
    <property type="match status" value="1"/>
</dbReference>
<name>YBEY_MYCBO</name>
<feature type="chain" id="PRO_0000102485" description="Endoribonuclease YbeY">
    <location>
        <begin position="1"/>
        <end position="177"/>
    </location>
</feature>
<feature type="binding site" evidence="1">
    <location>
        <position position="118"/>
    </location>
    <ligand>
        <name>Zn(2+)</name>
        <dbReference type="ChEBI" id="CHEBI:29105"/>
        <note>catalytic</note>
    </ligand>
</feature>
<feature type="binding site" evidence="1">
    <location>
        <position position="122"/>
    </location>
    <ligand>
        <name>Zn(2+)</name>
        <dbReference type="ChEBI" id="CHEBI:29105"/>
        <note>catalytic</note>
    </ligand>
</feature>
<feature type="binding site" evidence="1">
    <location>
        <position position="128"/>
    </location>
    <ligand>
        <name>Zn(2+)</name>
        <dbReference type="ChEBI" id="CHEBI:29105"/>
        <note>catalytic</note>
    </ligand>
</feature>